<feature type="chain" id="PRO_1000205833" description="Large ribosomal subunit protein bL34">
    <location>
        <begin position="1"/>
        <end position="45"/>
    </location>
</feature>
<feature type="region of interest" description="Disordered" evidence="2">
    <location>
        <begin position="1"/>
        <end position="45"/>
    </location>
</feature>
<feature type="compositionally biased region" description="Basic residues" evidence="2">
    <location>
        <begin position="10"/>
        <end position="27"/>
    </location>
</feature>
<evidence type="ECO:0000255" key="1">
    <source>
        <dbReference type="HAMAP-Rule" id="MF_00391"/>
    </source>
</evidence>
<evidence type="ECO:0000256" key="2">
    <source>
        <dbReference type="SAM" id="MobiDB-lite"/>
    </source>
</evidence>
<evidence type="ECO:0000305" key="3"/>
<protein>
    <recommendedName>
        <fullName evidence="1">Large ribosomal subunit protein bL34</fullName>
    </recommendedName>
    <alternativeName>
        <fullName evidence="3">50S ribosomal protein L34</fullName>
    </alternativeName>
</protein>
<name>RL34_MICLC</name>
<sequence>MTKRTFQPNNRRRARKHGFRARMRTRAGRAILSARRGKNRAELSA</sequence>
<dbReference type="EMBL" id="CP001628">
    <property type="protein sequence ID" value="ACS31811.1"/>
    <property type="molecule type" value="Genomic_DNA"/>
</dbReference>
<dbReference type="RefSeq" id="WP_002856443.1">
    <property type="nucleotide sequence ID" value="NZ_WBMF01000017.1"/>
</dbReference>
<dbReference type="SMR" id="C5C7X3"/>
<dbReference type="STRING" id="465515.Mlut_23480"/>
<dbReference type="EnsemblBacteria" id="ACS31811">
    <property type="protein sequence ID" value="ACS31811"/>
    <property type="gene ID" value="Mlut_23480"/>
</dbReference>
<dbReference type="GeneID" id="93363701"/>
<dbReference type="KEGG" id="mlu:Mlut_23480"/>
<dbReference type="eggNOG" id="COG0230">
    <property type="taxonomic scope" value="Bacteria"/>
</dbReference>
<dbReference type="HOGENOM" id="CLU_129938_2_1_11"/>
<dbReference type="Proteomes" id="UP000000738">
    <property type="component" value="Chromosome"/>
</dbReference>
<dbReference type="GO" id="GO:1990904">
    <property type="term" value="C:ribonucleoprotein complex"/>
    <property type="evidence" value="ECO:0007669"/>
    <property type="project" value="UniProtKB-KW"/>
</dbReference>
<dbReference type="GO" id="GO:0005840">
    <property type="term" value="C:ribosome"/>
    <property type="evidence" value="ECO:0007669"/>
    <property type="project" value="UniProtKB-KW"/>
</dbReference>
<dbReference type="GO" id="GO:0003735">
    <property type="term" value="F:structural constituent of ribosome"/>
    <property type="evidence" value="ECO:0007669"/>
    <property type="project" value="InterPro"/>
</dbReference>
<dbReference type="GO" id="GO:0006412">
    <property type="term" value="P:translation"/>
    <property type="evidence" value="ECO:0007669"/>
    <property type="project" value="UniProtKB-UniRule"/>
</dbReference>
<dbReference type="FunFam" id="1.10.287.3980:FF:000001">
    <property type="entry name" value="Mitochondrial ribosomal protein L34"/>
    <property type="match status" value="1"/>
</dbReference>
<dbReference type="Gene3D" id="1.10.287.3980">
    <property type="match status" value="1"/>
</dbReference>
<dbReference type="HAMAP" id="MF_00391">
    <property type="entry name" value="Ribosomal_bL34"/>
    <property type="match status" value="1"/>
</dbReference>
<dbReference type="InterPro" id="IPR000271">
    <property type="entry name" value="Ribosomal_bL34"/>
</dbReference>
<dbReference type="InterPro" id="IPR020939">
    <property type="entry name" value="Ribosomal_bL34_CS"/>
</dbReference>
<dbReference type="NCBIfam" id="TIGR01030">
    <property type="entry name" value="rpmH_bact"/>
    <property type="match status" value="1"/>
</dbReference>
<dbReference type="PANTHER" id="PTHR14503:SF4">
    <property type="entry name" value="LARGE RIBOSOMAL SUBUNIT PROTEIN BL34M"/>
    <property type="match status" value="1"/>
</dbReference>
<dbReference type="PANTHER" id="PTHR14503">
    <property type="entry name" value="MITOCHONDRIAL RIBOSOMAL PROTEIN 34 FAMILY MEMBER"/>
    <property type="match status" value="1"/>
</dbReference>
<dbReference type="Pfam" id="PF00468">
    <property type="entry name" value="Ribosomal_L34"/>
    <property type="match status" value="1"/>
</dbReference>
<dbReference type="PROSITE" id="PS00784">
    <property type="entry name" value="RIBOSOMAL_L34"/>
    <property type="match status" value="1"/>
</dbReference>
<accession>C5C7X3</accession>
<gene>
    <name evidence="1" type="primary">rpmH</name>
    <name type="ordered locus">Mlut_23480</name>
</gene>
<keyword id="KW-1185">Reference proteome</keyword>
<keyword id="KW-0687">Ribonucleoprotein</keyword>
<keyword id="KW-0689">Ribosomal protein</keyword>
<reference key="1">
    <citation type="journal article" date="2010" name="J. Bacteriol.">
        <title>Genome sequence of the Fleming strain of Micrococcus luteus, a simple free-living actinobacterium.</title>
        <authorList>
            <person name="Young M."/>
            <person name="Artsatbanov V."/>
            <person name="Beller H.R."/>
            <person name="Chandra G."/>
            <person name="Chater K.F."/>
            <person name="Dover L.G."/>
            <person name="Goh E.B."/>
            <person name="Kahan T."/>
            <person name="Kaprelyants A.S."/>
            <person name="Kyrpides N."/>
            <person name="Lapidus A."/>
            <person name="Lowry S.R."/>
            <person name="Lykidis A."/>
            <person name="Mahillon J."/>
            <person name="Markowitz V."/>
            <person name="Mavromatis K."/>
            <person name="Mukamolova G.V."/>
            <person name="Oren A."/>
            <person name="Rokem J.S."/>
            <person name="Smith M.C."/>
            <person name="Young D.I."/>
            <person name="Greenblatt C.L."/>
        </authorList>
    </citation>
    <scope>NUCLEOTIDE SEQUENCE [LARGE SCALE GENOMIC DNA]</scope>
    <source>
        <strain>ATCC 4698 / DSM 20030 / JCM 1464 / CCM 169 / CCUG 5858 / IAM 1056 / NBRC 3333 / NCIMB 9278 / NCTC 2665 / VKM Ac-2230</strain>
    </source>
</reference>
<comment type="similarity">
    <text evidence="1">Belongs to the bacterial ribosomal protein bL34 family.</text>
</comment>
<proteinExistence type="inferred from homology"/>
<organism>
    <name type="scientific">Micrococcus luteus (strain ATCC 4698 / DSM 20030 / JCM 1464 / CCM 169 / CCUG 5858 / IAM 1056 / NBRC 3333 / NCIMB 9278 / NCTC 2665 / VKM Ac-2230)</name>
    <name type="common">Micrococcus lysodeikticus</name>
    <dbReference type="NCBI Taxonomy" id="465515"/>
    <lineage>
        <taxon>Bacteria</taxon>
        <taxon>Bacillati</taxon>
        <taxon>Actinomycetota</taxon>
        <taxon>Actinomycetes</taxon>
        <taxon>Micrococcales</taxon>
        <taxon>Micrococcaceae</taxon>
        <taxon>Micrococcus</taxon>
    </lineage>
</organism>